<name>CORA_BLOFL</name>
<proteinExistence type="inferred from homology"/>
<reference key="1">
    <citation type="journal article" date="2003" name="Proc. Natl. Acad. Sci. U.S.A.">
        <title>The genome sequence of Blochmannia floridanus: comparative analysis of reduced genomes.</title>
        <authorList>
            <person name="Gil R."/>
            <person name="Silva F.J."/>
            <person name="Zientz E."/>
            <person name="Delmotte F."/>
            <person name="Gonzalez-Candelas F."/>
            <person name="Latorre A."/>
            <person name="Rausell C."/>
            <person name="Kamerbeek J."/>
            <person name="Gadau J."/>
            <person name="Hoelldobler B."/>
            <person name="van Ham R.C.H.J."/>
            <person name="Gross R."/>
            <person name="Moya A."/>
        </authorList>
    </citation>
    <scope>NUCLEOTIDE SEQUENCE [LARGE SCALE GENOMIC DNA]</scope>
</reference>
<gene>
    <name type="primary">corA</name>
    <name type="ordered locus">Bfl577</name>
</gene>
<feature type="chain" id="PRO_0000239089" description="Magnesium transport protein CorA">
    <location>
        <begin position="1"/>
        <end position="314"/>
    </location>
</feature>
<feature type="transmembrane region" description="Helical" evidence="3">
    <location>
        <begin position="256"/>
        <end position="276"/>
    </location>
</feature>
<feature type="transmembrane region" description="Helical" evidence="3">
    <location>
        <begin position="288"/>
        <end position="308"/>
    </location>
</feature>
<feature type="short sequence motif" description="Probable selectivity filter" evidence="2">
    <location>
        <begin position="275"/>
        <end position="277"/>
    </location>
</feature>
<feature type="site" description="Essential for ion permeation" evidence="2">
    <location>
        <position position="254"/>
    </location>
</feature>
<protein>
    <recommendedName>
        <fullName>Magnesium transport protein CorA</fullName>
    </recommendedName>
</protein>
<keyword id="KW-0997">Cell inner membrane</keyword>
<keyword id="KW-1003">Cell membrane</keyword>
<keyword id="KW-0406">Ion transport</keyword>
<keyword id="KW-0460">Magnesium</keyword>
<keyword id="KW-0472">Membrane</keyword>
<keyword id="KW-1185">Reference proteome</keyword>
<keyword id="KW-0812">Transmembrane</keyword>
<keyword id="KW-1133">Transmembrane helix</keyword>
<keyword id="KW-0813">Transport</keyword>
<dbReference type="EMBL" id="BX248583">
    <property type="protein sequence ID" value="CAD83259.1"/>
    <property type="molecule type" value="Genomic_DNA"/>
</dbReference>
<dbReference type="SMR" id="Q7VRM7"/>
<dbReference type="STRING" id="203907.Bfl577"/>
<dbReference type="KEGG" id="bfl:Bfl577"/>
<dbReference type="eggNOG" id="COG0598">
    <property type="taxonomic scope" value="Bacteria"/>
</dbReference>
<dbReference type="HOGENOM" id="CLU_007127_5_0_6"/>
<dbReference type="OrthoDB" id="9803416at2"/>
<dbReference type="Proteomes" id="UP000002192">
    <property type="component" value="Chromosome"/>
</dbReference>
<dbReference type="GO" id="GO:0005886">
    <property type="term" value="C:plasma membrane"/>
    <property type="evidence" value="ECO:0007669"/>
    <property type="project" value="UniProtKB-SubCell"/>
</dbReference>
<dbReference type="GO" id="GO:0015087">
    <property type="term" value="F:cobalt ion transmembrane transporter activity"/>
    <property type="evidence" value="ECO:0007669"/>
    <property type="project" value="InterPro"/>
</dbReference>
<dbReference type="GO" id="GO:0015095">
    <property type="term" value="F:magnesium ion transmembrane transporter activity"/>
    <property type="evidence" value="ECO:0007669"/>
    <property type="project" value="InterPro"/>
</dbReference>
<dbReference type="GO" id="GO:0015099">
    <property type="term" value="F:nickel cation transmembrane transporter activity"/>
    <property type="evidence" value="ECO:0007669"/>
    <property type="project" value="TreeGrafter"/>
</dbReference>
<dbReference type="FunFam" id="1.20.58.340:FF:000001">
    <property type="entry name" value="Magnesium transport protein CorA"/>
    <property type="match status" value="1"/>
</dbReference>
<dbReference type="Gene3D" id="3.30.460.20">
    <property type="entry name" value="CorA soluble domain-like"/>
    <property type="match status" value="1"/>
</dbReference>
<dbReference type="Gene3D" id="1.20.58.340">
    <property type="entry name" value="Magnesium transport protein CorA, transmembrane region"/>
    <property type="match status" value="1"/>
</dbReference>
<dbReference type="InterPro" id="IPR045861">
    <property type="entry name" value="CorA_cytoplasmic_dom"/>
</dbReference>
<dbReference type="InterPro" id="IPR050829">
    <property type="entry name" value="CorA_MIT"/>
</dbReference>
<dbReference type="InterPro" id="IPR045863">
    <property type="entry name" value="CorA_TM1_TM2"/>
</dbReference>
<dbReference type="InterPro" id="IPR004488">
    <property type="entry name" value="Mg/Co-transport_prot_CorA"/>
</dbReference>
<dbReference type="InterPro" id="IPR002523">
    <property type="entry name" value="MgTranspt_CorA/ZnTranspt_ZntB"/>
</dbReference>
<dbReference type="NCBIfam" id="TIGR00383">
    <property type="entry name" value="corA"/>
    <property type="match status" value="1"/>
</dbReference>
<dbReference type="PANTHER" id="PTHR47685">
    <property type="entry name" value="MAGNESIUM TRANSPORT PROTEIN CORA"/>
    <property type="match status" value="1"/>
</dbReference>
<dbReference type="PANTHER" id="PTHR47685:SF1">
    <property type="entry name" value="MAGNESIUM TRANSPORT PROTEIN CORA"/>
    <property type="match status" value="1"/>
</dbReference>
<dbReference type="Pfam" id="PF01544">
    <property type="entry name" value="CorA"/>
    <property type="match status" value="1"/>
</dbReference>
<dbReference type="SUPFAM" id="SSF143865">
    <property type="entry name" value="CorA soluble domain-like"/>
    <property type="match status" value="1"/>
</dbReference>
<dbReference type="SUPFAM" id="SSF144083">
    <property type="entry name" value="Magnesium transport protein CorA, transmembrane region"/>
    <property type="match status" value="1"/>
</dbReference>
<evidence type="ECO:0000250" key="1">
    <source>
        <dbReference type="UniProtKB" id="P0ABI4"/>
    </source>
</evidence>
<evidence type="ECO:0000250" key="2">
    <source>
        <dbReference type="UniProtKB" id="Q9WZ31"/>
    </source>
</evidence>
<evidence type="ECO:0000255" key="3"/>
<evidence type="ECO:0000305" key="4"/>
<sequence>MFNIFQLKNNCLFRMDSQDVISSINDVIWIDIIQSDDNESHDIQSISEQFKINFFEIKDILKNKRFCNSKQGVYIRSFFFSYNEDNQIDNSIVSFIICNNCLYTLRESGFSVFCIYQESLNNHVLNDGNAYELLLSLFEVKIDDLTDRIEHIYETLERLSFVIMDEQQIDGYDSILEDLAKLESMSWKIHINLLDTERALQFLVRKVKLPVTQKRHANGILRGITLLLPYNECIFQKVSFLTQSVMGLINIEQNRIIKIFSIVFLPPTLIASSYGMNFEFMPELKWSFGYPSAIFLMILTGLAPYLYFKYKKWL</sequence>
<organism>
    <name type="scientific">Blochmanniella floridana</name>
    <dbReference type="NCBI Taxonomy" id="203907"/>
    <lineage>
        <taxon>Bacteria</taxon>
        <taxon>Pseudomonadati</taxon>
        <taxon>Pseudomonadota</taxon>
        <taxon>Gammaproteobacteria</taxon>
        <taxon>Enterobacterales</taxon>
        <taxon>Enterobacteriaceae</taxon>
        <taxon>ant endosymbionts</taxon>
        <taxon>Candidatus Blochmanniella</taxon>
    </lineage>
</organism>
<comment type="function">
    <text evidence="1 2">Mediates influx of magnesium ions (By similarity). Alternates between open and closed states. Activated by low cytoplasmic Mg(2+) levels. Inactive when cytoplasmic Mg(2+) levels are high (By similarity).</text>
</comment>
<comment type="catalytic activity">
    <reaction evidence="1">
        <text>Mg(2+)(in) = Mg(2+)(out)</text>
        <dbReference type="Rhea" id="RHEA:29827"/>
        <dbReference type="ChEBI" id="CHEBI:18420"/>
    </reaction>
</comment>
<comment type="subunit">
    <text evidence="2">Homopentamer. In the absence of Mg(2+), interactions between subunits are weakened, and dimers, trimers and tetramers can be observed in vitro (By similarity).</text>
</comment>
<comment type="subcellular location">
    <subcellularLocation>
        <location evidence="4">Cell inner membrane</location>
        <topology evidence="2">Multi-pass membrane protein</topology>
    </subcellularLocation>
</comment>
<comment type="domain">
    <text evidence="2">The central ion permeation pathway is formed by the first transmembrane domain from each of the five subunits. Mg(2+) binding strengthens interactions between subunits and leads to the formation of a symmetrical homopentamer surrounding a closed ion permeation pathway. Low Mg(2+) concentrations trigger both a conformation change within each subunit and a loosening of the interactions between subunits. This results in an open ion conduction pathway. In addition, this results in a less symmetrical shape of the whole complex.</text>
</comment>
<comment type="similarity">
    <text evidence="4">Belongs to the CorA metal ion transporter (MIT) (TC 1.A.35) family.</text>
</comment>
<accession>Q7VRM7</accession>